<keyword id="KW-0963">Cytoplasm</keyword>
<keyword id="KW-0238">DNA-binding</keyword>
<keyword id="KW-1185">Reference proteome</keyword>
<keyword id="KW-0678">Repressor</keyword>
<keyword id="KW-0804">Transcription</keyword>
<keyword id="KW-0805">Transcription regulation</keyword>
<proteinExistence type="inferred from homology"/>
<organism>
    <name type="scientific">Clostridium perfringens (strain 13 / Type A)</name>
    <dbReference type="NCBI Taxonomy" id="195102"/>
    <lineage>
        <taxon>Bacteria</taxon>
        <taxon>Bacillati</taxon>
        <taxon>Bacillota</taxon>
        <taxon>Clostridia</taxon>
        <taxon>Eubacteriales</taxon>
        <taxon>Clostridiaceae</taxon>
        <taxon>Clostridium</taxon>
    </lineage>
</organism>
<reference key="1">
    <citation type="journal article" date="2002" name="Proc. Natl. Acad. Sci. U.S.A.">
        <title>Complete genome sequence of Clostridium perfringens, an anaerobic flesh-eater.</title>
        <authorList>
            <person name="Shimizu T."/>
            <person name="Ohtani K."/>
            <person name="Hirakawa H."/>
            <person name="Ohshima K."/>
            <person name="Yamashita A."/>
            <person name="Shiba T."/>
            <person name="Ogasawara N."/>
            <person name="Hattori M."/>
            <person name="Kuhara S."/>
            <person name="Hayashi H."/>
        </authorList>
    </citation>
    <scope>NUCLEOTIDE SEQUENCE [LARGE SCALE GENOMIC DNA]</scope>
    <source>
        <strain>13 / Type A</strain>
    </source>
</reference>
<dbReference type="EMBL" id="BA000016">
    <property type="protein sequence ID" value="BAB81407.1"/>
    <property type="molecule type" value="Genomic_DNA"/>
</dbReference>
<dbReference type="RefSeq" id="WP_003449426.1">
    <property type="nucleotide sequence ID" value="NC_003366.1"/>
</dbReference>
<dbReference type="SMR" id="Q8XJQ5"/>
<dbReference type="STRING" id="195102.gene:10490965"/>
<dbReference type="GeneID" id="93001761"/>
<dbReference type="KEGG" id="cpe:CPE1701"/>
<dbReference type="HOGENOM" id="CLU_089581_0_0_9"/>
<dbReference type="Proteomes" id="UP000000818">
    <property type="component" value="Chromosome"/>
</dbReference>
<dbReference type="GO" id="GO:0005737">
    <property type="term" value="C:cytoplasm"/>
    <property type="evidence" value="ECO:0007669"/>
    <property type="project" value="UniProtKB-SubCell"/>
</dbReference>
<dbReference type="GO" id="GO:0003677">
    <property type="term" value="F:DNA binding"/>
    <property type="evidence" value="ECO:0007669"/>
    <property type="project" value="UniProtKB-UniRule"/>
</dbReference>
<dbReference type="GO" id="GO:0003700">
    <property type="term" value="F:DNA-binding transcription factor activity"/>
    <property type="evidence" value="ECO:0007669"/>
    <property type="project" value="InterPro"/>
</dbReference>
<dbReference type="GO" id="GO:0005525">
    <property type="term" value="F:GTP binding"/>
    <property type="evidence" value="ECO:0007669"/>
    <property type="project" value="InterPro"/>
</dbReference>
<dbReference type="GO" id="GO:0045892">
    <property type="term" value="P:negative regulation of DNA-templated transcription"/>
    <property type="evidence" value="ECO:0007669"/>
    <property type="project" value="UniProtKB-UniRule"/>
</dbReference>
<dbReference type="FunFam" id="1.10.10.10:FF:000034">
    <property type="entry name" value="GTP-sensing transcriptional pleiotropic repressor CodY"/>
    <property type="match status" value="1"/>
</dbReference>
<dbReference type="Gene3D" id="3.30.450.40">
    <property type="match status" value="1"/>
</dbReference>
<dbReference type="Gene3D" id="1.10.10.10">
    <property type="entry name" value="Winged helix-like DNA-binding domain superfamily/Winged helix DNA-binding domain"/>
    <property type="match status" value="1"/>
</dbReference>
<dbReference type="HAMAP" id="MF_00621">
    <property type="entry name" value="HTH_type_CodY"/>
    <property type="match status" value="1"/>
</dbReference>
<dbReference type="InterPro" id="IPR014154">
    <property type="entry name" value="CodY"/>
</dbReference>
<dbReference type="InterPro" id="IPR029016">
    <property type="entry name" value="GAF-like_dom_sf"/>
</dbReference>
<dbReference type="InterPro" id="IPR013198">
    <property type="entry name" value="GTP_trans_reg_CodY_C"/>
</dbReference>
<dbReference type="InterPro" id="IPR010312">
    <property type="entry name" value="Transc_reg_CodY_N"/>
</dbReference>
<dbReference type="InterPro" id="IPR036388">
    <property type="entry name" value="WH-like_DNA-bd_sf"/>
</dbReference>
<dbReference type="InterPro" id="IPR036390">
    <property type="entry name" value="WH_DNA-bd_sf"/>
</dbReference>
<dbReference type="NCBIfam" id="TIGR02787">
    <property type="entry name" value="codY_Gpos"/>
    <property type="match status" value="1"/>
</dbReference>
<dbReference type="NCBIfam" id="NF003170">
    <property type="entry name" value="PRK04158.1"/>
    <property type="match status" value="1"/>
</dbReference>
<dbReference type="PANTHER" id="PTHR40062:SF1">
    <property type="entry name" value="GLOBAL TRANSCRIPTIONAL REGULATOR CODY"/>
    <property type="match status" value="1"/>
</dbReference>
<dbReference type="PANTHER" id="PTHR40062">
    <property type="entry name" value="GTP-SENSING TRANSCRIPTIONAL PLEIOTROPIC REPRESSOR CODY"/>
    <property type="match status" value="1"/>
</dbReference>
<dbReference type="Pfam" id="PF06018">
    <property type="entry name" value="CodY"/>
    <property type="match status" value="1"/>
</dbReference>
<dbReference type="Pfam" id="PF08222">
    <property type="entry name" value="HTH_CodY"/>
    <property type="match status" value="1"/>
</dbReference>
<dbReference type="PIRSF" id="PIRSF011572">
    <property type="entry name" value="GTP_sensing_CodY"/>
    <property type="match status" value="1"/>
</dbReference>
<dbReference type="SUPFAM" id="SSF46785">
    <property type="entry name" value="Winged helix' DNA-binding domain"/>
    <property type="match status" value="1"/>
</dbReference>
<gene>
    <name evidence="1" type="primary">codY</name>
    <name type="ordered locus">CPE1701</name>
</gene>
<comment type="function">
    <text evidence="1">DNA-binding global transcriptional regulator which is involved in the adaptive response to starvation and acts by directly or indirectly controlling the expression of numerous genes in response to nutrient availability. During rapid exponential growth, CodY is highly active and represses genes whose products allow adaptation to nutrient depletion.</text>
</comment>
<comment type="subcellular location">
    <subcellularLocation>
        <location evidence="1">Cytoplasm</location>
    </subcellularLocation>
</comment>
<comment type="similarity">
    <text evidence="1">Belongs to the CodY family.</text>
</comment>
<accession>Q8XJQ5</accession>
<sequence length="258" mass="28546">MSTLLSKTRRLNKILQKSGTEAIAFGDICQLLSDVMSCNVYLVGRKGRILGYSFSEKFECDIMKEKVVVDRKFPEDYNNKLINIQDTIANIPNKGICVFEGVGECLISKKISTIVPIVGNGDRLGTLLLARFGEEFNDDDLVLAEYSATIVGMELLRARQGEIEEEARKKAVVQLAIGTLSYSELEAVEHIFSELNGDEGLLVASKIADKVGITRSVIVNALRKFESAGVIESRSLGMKGTHIKILNEKLMDELKKIK</sequence>
<name>CODY_CLOPE</name>
<feature type="chain" id="PRO_0000213223" description="Global transcriptional regulator CodY">
    <location>
        <begin position="1"/>
        <end position="258"/>
    </location>
</feature>
<feature type="DNA-binding region" description="H-T-H motif" evidence="1">
    <location>
        <begin position="204"/>
        <end position="223"/>
    </location>
</feature>
<feature type="region of interest" description="GAF domain" evidence="1">
    <location>
        <begin position="1"/>
        <end position="156"/>
    </location>
</feature>
<protein>
    <recommendedName>
        <fullName evidence="1">Global transcriptional regulator CodY</fullName>
    </recommendedName>
</protein>
<evidence type="ECO:0000255" key="1">
    <source>
        <dbReference type="HAMAP-Rule" id="MF_00621"/>
    </source>
</evidence>